<feature type="chain" id="PRO_0000146847" description="Putative nickel insertion protein">
    <location>
        <begin position="1"/>
        <end position="388"/>
    </location>
</feature>
<keyword id="KW-0533">Nickel</keyword>
<keyword id="KW-1185">Reference proteome</keyword>
<protein>
    <recommendedName>
        <fullName evidence="1">Putative nickel insertion protein</fullName>
    </recommendedName>
</protein>
<sequence length="388" mass="41717">MKILYFDCFAGIAGDMTVAALLDLGVPFEVVRDAVGCLRLPHSSYSLATERTSRKGITATRFVVHVEEHQPNRHYGDIAAMIEESPLADGIKEKAQRIFFRLAEAEAKVHGVELGRVHFHEVGAVDSIADIVGAAAAIDWLGIESIHGGALPLGSGFVETAHGRLPVPAPATAELLRGIPVHGEAGPGERVTPTGAAILAALAAGFGPIPPMTVTGVGCGAGTRDFADIPNILRVFQGEIDRGFERDDVVVIEAHIDDTSPEILGYVMERCLAAGALDAAFSPLQMKKNRPAVRLTVVVHPEQRDELAALILRETSAIGVRFHPAGRLKLRRLVEERDTTLGRVRVKVINGDGVARVAPEYDDCCRIAAERGMPLMEVYRIVERECGQ</sequence>
<dbReference type="EMBL" id="AE017180">
    <property type="protein sequence ID" value="AAR33476.1"/>
    <property type="molecule type" value="Genomic_DNA"/>
</dbReference>
<dbReference type="RefSeq" id="NP_951203.1">
    <property type="nucleotide sequence ID" value="NC_002939.5"/>
</dbReference>
<dbReference type="SMR" id="Q74GV3"/>
<dbReference type="STRING" id="243231.GSU0141"/>
<dbReference type="EnsemblBacteria" id="AAR33476">
    <property type="protein sequence ID" value="AAR33476"/>
    <property type="gene ID" value="GSU0141"/>
</dbReference>
<dbReference type="KEGG" id="gsu:GSU0141"/>
<dbReference type="PATRIC" id="fig|243231.5.peg.142"/>
<dbReference type="eggNOG" id="COG1641">
    <property type="taxonomic scope" value="Bacteria"/>
</dbReference>
<dbReference type="HOGENOM" id="CLU_028523_2_1_7"/>
<dbReference type="InParanoid" id="Q74GV3"/>
<dbReference type="OrthoDB" id="9765625at2"/>
<dbReference type="Proteomes" id="UP000000577">
    <property type="component" value="Chromosome"/>
</dbReference>
<dbReference type="GO" id="GO:0016829">
    <property type="term" value="F:lyase activity"/>
    <property type="evidence" value="ECO:0007669"/>
    <property type="project" value="UniProtKB-UniRule"/>
</dbReference>
<dbReference type="GO" id="GO:0016151">
    <property type="term" value="F:nickel cation binding"/>
    <property type="evidence" value="ECO:0007669"/>
    <property type="project" value="UniProtKB-UniRule"/>
</dbReference>
<dbReference type="Gene3D" id="3.10.20.300">
    <property type="entry name" value="mk0293 like domain"/>
    <property type="match status" value="1"/>
</dbReference>
<dbReference type="Gene3D" id="3.30.70.1380">
    <property type="entry name" value="Transcriptional regulatory protein pf0864 domain like"/>
    <property type="match status" value="1"/>
</dbReference>
<dbReference type="HAMAP" id="MF_01074">
    <property type="entry name" value="LarC"/>
    <property type="match status" value="1"/>
</dbReference>
<dbReference type="InterPro" id="IPR002822">
    <property type="entry name" value="Ni_insertion"/>
</dbReference>
<dbReference type="NCBIfam" id="TIGR00299">
    <property type="entry name" value="nickel pincer cofactor biosynthesis protein LarC"/>
    <property type="match status" value="1"/>
</dbReference>
<dbReference type="PANTHER" id="PTHR36566">
    <property type="entry name" value="NICKEL INSERTION PROTEIN-RELATED"/>
    <property type="match status" value="1"/>
</dbReference>
<dbReference type="PANTHER" id="PTHR36566:SF1">
    <property type="entry name" value="PYRIDINIUM-3,5-BISTHIOCARBOXYLIC ACID MONONUCLEOTIDE NICKEL INSERTION PROTEIN"/>
    <property type="match status" value="1"/>
</dbReference>
<dbReference type="Pfam" id="PF01969">
    <property type="entry name" value="Ni_insertion"/>
    <property type="match status" value="1"/>
</dbReference>
<proteinExistence type="inferred from homology"/>
<gene>
    <name type="ordered locus">GSU0141</name>
</gene>
<accession>Q74GV3</accession>
<comment type="similarity">
    <text evidence="1">Belongs to the LarC family.</text>
</comment>
<name>Y141_GEOSL</name>
<evidence type="ECO:0000255" key="1">
    <source>
        <dbReference type="HAMAP-Rule" id="MF_01074"/>
    </source>
</evidence>
<organism>
    <name type="scientific">Geobacter sulfurreducens (strain ATCC 51573 / DSM 12127 / PCA)</name>
    <dbReference type="NCBI Taxonomy" id="243231"/>
    <lineage>
        <taxon>Bacteria</taxon>
        <taxon>Pseudomonadati</taxon>
        <taxon>Thermodesulfobacteriota</taxon>
        <taxon>Desulfuromonadia</taxon>
        <taxon>Geobacterales</taxon>
        <taxon>Geobacteraceae</taxon>
        <taxon>Geobacter</taxon>
    </lineage>
</organism>
<reference key="1">
    <citation type="journal article" date="2003" name="Science">
        <title>Genome of Geobacter sulfurreducens: metal reduction in subsurface environments.</title>
        <authorList>
            <person name="Methe B.A."/>
            <person name="Nelson K.E."/>
            <person name="Eisen J.A."/>
            <person name="Paulsen I.T."/>
            <person name="Nelson W.C."/>
            <person name="Heidelberg J.F."/>
            <person name="Wu D."/>
            <person name="Wu M."/>
            <person name="Ward N.L."/>
            <person name="Beanan M.J."/>
            <person name="Dodson R.J."/>
            <person name="Madupu R."/>
            <person name="Brinkac L.M."/>
            <person name="Daugherty S.C."/>
            <person name="DeBoy R.T."/>
            <person name="Durkin A.S."/>
            <person name="Gwinn M.L."/>
            <person name="Kolonay J.F."/>
            <person name="Sullivan S.A."/>
            <person name="Haft D.H."/>
            <person name="Selengut J."/>
            <person name="Davidsen T.M."/>
            <person name="Zafar N."/>
            <person name="White O."/>
            <person name="Tran B."/>
            <person name="Romero C."/>
            <person name="Forberger H.A."/>
            <person name="Weidman J.F."/>
            <person name="Khouri H.M."/>
            <person name="Feldblyum T.V."/>
            <person name="Utterback T.R."/>
            <person name="Van Aken S.E."/>
            <person name="Lovley D.R."/>
            <person name="Fraser C.M."/>
        </authorList>
    </citation>
    <scope>NUCLEOTIDE SEQUENCE [LARGE SCALE GENOMIC DNA]</scope>
    <source>
        <strain>ATCC 51573 / DSM 12127 / PCA</strain>
    </source>
</reference>